<accession>Q9CCQ3</accession>
<proteinExistence type="inferred from homology"/>
<feature type="chain" id="PRO_0000102128" description="Probable replication restart protein PriA">
    <location>
        <begin position="1"/>
        <end position="651"/>
    </location>
</feature>
<feature type="binding site" evidence="1">
    <location>
        <position position="371"/>
    </location>
    <ligand>
        <name>Zn(2+)</name>
        <dbReference type="ChEBI" id="CHEBI:29105"/>
        <label>1</label>
    </ligand>
</feature>
<feature type="binding site" evidence="1">
    <location>
        <position position="374"/>
    </location>
    <ligand>
        <name>Zn(2+)</name>
        <dbReference type="ChEBI" id="CHEBI:29105"/>
        <label>1</label>
    </ligand>
</feature>
<feature type="binding site" evidence="1">
    <location>
        <position position="380"/>
    </location>
    <ligand>
        <name>Zn(2+)</name>
        <dbReference type="ChEBI" id="CHEBI:29105"/>
        <label>2</label>
    </ligand>
</feature>
<feature type="binding site" evidence="1">
    <location>
        <position position="383"/>
    </location>
    <ligand>
        <name>Zn(2+)</name>
        <dbReference type="ChEBI" id="CHEBI:29105"/>
        <label>2</label>
    </ligand>
</feature>
<feature type="binding site" evidence="1">
    <location>
        <position position="399"/>
    </location>
    <ligand>
        <name>Zn(2+)</name>
        <dbReference type="ChEBI" id="CHEBI:29105"/>
        <label>2</label>
    </ligand>
</feature>
<feature type="binding site" evidence="1">
    <location>
        <position position="402"/>
    </location>
    <ligand>
        <name>Zn(2+)</name>
        <dbReference type="ChEBI" id="CHEBI:29105"/>
        <label>2</label>
    </ligand>
</feature>
<feature type="binding site" evidence="1">
    <location>
        <position position="411"/>
    </location>
    <ligand>
        <name>Zn(2+)</name>
        <dbReference type="ChEBI" id="CHEBI:29105"/>
        <label>1</label>
    </ligand>
</feature>
<feature type="binding site" evidence="1">
    <location>
        <position position="414"/>
    </location>
    <ligand>
        <name>Zn(2+)</name>
        <dbReference type="ChEBI" id="CHEBI:29105"/>
        <label>1</label>
    </ligand>
</feature>
<protein>
    <recommendedName>
        <fullName evidence="1">Probable replication restart protein PriA</fullName>
    </recommendedName>
    <alternativeName>
        <fullName evidence="1">Putative ATP-dependent DNA helicase PriA</fullName>
    </alternativeName>
</protein>
<reference key="1">
    <citation type="journal article" date="2001" name="Nature">
        <title>Massive gene decay in the leprosy bacillus.</title>
        <authorList>
            <person name="Cole S.T."/>
            <person name="Eiglmeier K."/>
            <person name="Parkhill J."/>
            <person name="James K.D."/>
            <person name="Thomson N.R."/>
            <person name="Wheeler P.R."/>
            <person name="Honore N."/>
            <person name="Garnier T."/>
            <person name="Churcher C.M."/>
            <person name="Harris D.E."/>
            <person name="Mungall K.L."/>
            <person name="Basham D."/>
            <person name="Brown D."/>
            <person name="Chillingworth T."/>
            <person name="Connor R."/>
            <person name="Davies R.M."/>
            <person name="Devlin K."/>
            <person name="Duthoy S."/>
            <person name="Feltwell T."/>
            <person name="Fraser A."/>
            <person name="Hamlin N."/>
            <person name="Holroyd S."/>
            <person name="Hornsby T."/>
            <person name="Jagels K."/>
            <person name="Lacroix C."/>
            <person name="Maclean J."/>
            <person name="Moule S."/>
            <person name="Murphy L.D."/>
            <person name="Oliver K."/>
            <person name="Quail M.A."/>
            <person name="Rajandream M.A."/>
            <person name="Rutherford K.M."/>
            <person name="Rutter S."/>
            <person name="Seeger K."/>
            <person name="Simon S."/>
            <person name="Simmonds M."/>
            <person name="Skelton J."/>
            <person name="Squares R."/>
            <person name="Squares S."/>
            <person name="Stevens K."/>
            <person name="Taylor K."/>
            <person name="Whitehead S."/>
            <person name="Woodward J.R."/>
            <person name="Barrell B.G."/>
        </authorList>
    </citation>
    <scope>NUCLEOTIDE SEQUENCE [LARGE SCALE GENOMIC DNA]</scope>
    <source>
        <strain>TN</strain>
    </source>
</reference>
<dbReference type="EMBL" id="AL583918">
    <property type="protein sequence ID" value="CAC30056.1"/>
    <property type="molecule type" value="Genomic_DNA"/>
</dbReference>
<dbReference type="PIR" id="D86977">
    <property type="entry name" value="D86977"/>
</dbReference>
<dbReference type="RefSeq" id="NP_301464.1">
    <property type="nucleotide sequence ID" value="NC_002677.1"/>
</dbReference>
<dbReference type="RefSeq" id="WP_010907788.1">
    <property type="nucleotide sequence ID" value="NC_002677.1"/>
</dbReference>
<dbReference type="SMR" id="Q9CCQ3"/>
<dbReference type="STRING" id="272631.gene:17574369"/>
<dbReference type="KEGG" id="mle:ML0548"/>
<dbReference type="PATRIC" id="fig|272631.5.peg.955"/>
<dbReference type="Leproma" id="ML0548"/>
<dbReference type="eggNOG" id="COG1198">
    <property type="taxonomic scope" value="Bacteria"/>
</dbReference>
<dbReference type="HOGENOM" id="CLU_015485_1_0_11"/>
<dbReference type="OrthoDB" id="3177118at2"/>
<dbReference type="Proteomes" id="UP000000806">
    <property type="component" value="Chromosome"/>
</dbReference>
<dbReference type="GO" id="GO:1990077">
    <property type="term" value="C:primosome complex"/>
    <property type="evidence" value="ECO:0007669"/>
    <property type="project" value="UniProtKB-UniRule"/>
</dbReference>
<dbReference type="GO" id="GO:0043138">
    <property type="term" value="F:3'-5' DNA helicase activity"/>
    <property type="evidence" value="ECO:0007669"/>
    <property type="project" value="TreeGrafter"/>
</dbReference>
<dbReference type="GO" id="GO:0005524">
    <property type="term" value="F:ATP binding"/>
    <property type="evidence" value="ECO:0007669"/>
    <property type="project" value="UniProtKB-UniRule"/>
</dbReference>
<dbReference type="GO" id="GO:0003677">
    <property type="term" value="F:DNA binding"/>
    <property type="evidence" value="ECO:0007669"/>
    <property type="project" value="UniProtKB-UniRule"/>
</dbReference>
<dbReference type="GO" id="GO:0016787">
    <property type="term" value="F:hydrolase activity"/>
    <property type="evidence" value="ECO:0007669"/>
    <property type="project" value="UniProtKB-KW"/>
</dbReference>
<dbReference type="GO" id="GO:0008270">
    <property type="term" value="F:zinc ion binding"/>
    <property type="evidence" value="ECO:0007669"/>
    <property type="project" value="UniProtKB-UniRule"/>
</dbReference>
<dbReference type="GO" id="GO:0006310">
    <property type="term" value="P:DNA recombination"/>
    <property type="evidence" value="ECO:0007669"/>
    <property type="project" value="InterPro"/>
</dbReference>
<dbReference type="GO" id="GO:0006270">
    <property type="term" value="P:DNA replication initiation"/>
    <property type="evidence" value="ECO:0007669"/>
    <property type="project" value="TreeGrafter"/>
</dbReference>
<dbReference type="GO" id="GO:0006269">
    <property type="term" value="P:DNA replication, synthesis of primer"/>
    <property type="evidence" value="ECO:0007669"/>
    <property type="project" value="UniProtKB-KW"/>
</dbReference>
<dbReference type="GO" id="GO:0006302">
    <property type="term" value="P:double-strand break repair"/>
    <property type="evidence" value="ECO:0007669"/>
    <property type="project" value="InterPro"/>
</dbReference>
<dbReference type="Gene3D" id="3.40.50.300">
    <property type="entry name" value="P-loop containing nucleotide triphosphate hydrolases"/>
    <property type="match status" value="1"/>
</dbReference>
<dbReference type="Gene3D" id="3.40.1440.60">
    <property type="entry name" value="PriA, 3(prime) DNA-binding domain"/>
    <property type="match status" value="1"/>
</dbReference>
<dbReference type="HAMAP" id="MF_00983">
    <property type="entry name" value="PriA"/>
    <property type="match status" value="1"/>
</dbReference>
<dbReference type="InterPro" id="IPR027417">
    <property type="entry name" value="P-loop_NTPase"/>
</dbReference>
<dbReference type="InterPro" id="IPR005259">
    <property type="entry name" value="PriA"/>
</dbReference>
<dbReference type="InterPro" id="IPR041222">
    <property type="entry name" value="PriA_3primeBD"/>
</dbReference>
<dbReference type="InterPro" id="IPR042115">
    <property type="entry name" value="PriA_3primeBD_sf"/>
</dbReference>
<dbReference type="InterPro" id="IPR050880">
    <property type="entry name" value="PriA_helicase"/>
</dbReference>
<dbReference type="NCBIfam" id="NF011454">
    <property type="entry name" value="PRK14873.1-4"/>
    <property type="match status" value="1"/>
</dbReference>
<dbReference type="PANTHER" id="PTHR30580">
    <property type="entry name" value="PRIMOSOMAL PROTEIN N"/>
    <property type="match status" value="1"/>
</dbReference>
<dbReference type="PANTHER" id="PTHR30580:SF0">
    <property type="entry name" value="PRIMOSOMAL PROTEIN N"/>
    <property type="match status" value="1"/>
</dbReference>
<dbReference type="Pfam" id="PF17764">
    <property type="entry name" value="PriA_3primeBD"/>
    <property type="match status" value="1"/>
</dbReference>
<evidence type="ECO:0000255" key="1">
    <source>
        <dbReference type="HAMAP-Rule" id="MF_00983"/>
    </source>
</evidence>
<gene>
    <name evidence="1" type="primary">priA</name>
    <name type="ordered locus">ML0548</name>
</gene>
<comment type="function">
    <text evidence="1">Initiates the restart of stalled replication forks, which reloads the replicative helicase on sites other than the origin of replication. Recognizes and binds to abandoned replication forks and remodels them to uncover a helicase loading site. Promotes assembly of the primosome at these replication forks.</text>
</comment>
<comment type="cofactor">
    <cofactor evidence="1">
        <name>Zn(2+)</name>
        <dbReference type="ChEBI" id="CHEBI:29105"/>
    </cofactor>
    <text evidence="1">Binds 2 zinc ions per subunit.</text>
</comment>
<comment type="subunit">
    <text evidence="1">Component of the replication restart primosome.</text>
</comment>
<comment type="similarity">
    <text evidence="1">Belongs to the helicase family. PriA subfamily.</text>
</comment>
<comment type="caution">
    <text evidence="1">As this protein does not have any detectable helicase domains, it probably does not have helicase activity.</text>
</comment>
<organism>
    <name type="scientific">Mycobacterium leprae (strain TN)</name>
    <dbReference type="NCBI Taxonomy" id="272631"/>
    <lineage>
        <taxon>Bacteria</taxon>
        <taxon>Bacillati</taxon>
        <taxon>Actinomycetota</taxon>
        <taxon>Actinomycetes</taxon>
        <taxon>Mycobacteriales</taxon>
        <taxon>Mycobacteriaceae</taxon>
        <taxon>Mycobacterium</taxon>
    </lineage>
</organism>
<keyword id="KW-0067">ATP-binding</keyword>
<keyword id="KW-0235">DNA replication</keyword>
<keyword id="KW-0238">DNA-binding</keyword>
<keyword id="KW-0479">Metal-binding</keyword>
<keyword id="KW-0547">Nucleotide-binding</keyword>
<keyword id="KW-0639">Primosome</keyword>
<keyword id="KW-1185">Reference proteome</keyword>
<keyword id="KW-0862">Zinc</keyword>
<sequence>MLSVPHLDREFDYLVSAEQSDDAQPGVRVRVRFHGRLVDGFVLERRNDTEHFGKLGWLDRVVSAQPVLTAEVRRLVDAVVARYAGTRPDVLRLAVPTRHARVERETLAIPVSPLPLIPGPVDPSGWEVYGRGGQFLTALAESRAARAVWQALPGEQWADRFAEAAAQAIRAGRAALAIVPDQRDLDVLWRAVTTRVDERSVVALSAGLGQAVRYQRWLKVLRGSARLVIGTRSAVFAPVNDLGLVMVWSDADDMLAEPRAPYPHAREVAMLRAYQARCAALIGGYTRTAEAHALVRSGWAHDVVAARSVVRARAPRVVALDDSGYAEESDPAARTARLPSIALRAARSALAAGAPVLVQVPRRGYVPSLACGRCRTLARCRHCTGPLSLLDRATPGTVCCWCGRADLTLRCARCGSEVVRAVVVGARRTAEELGRAFAGMPVITSVGDTIVPEVGARPALVVATPGAEPRAPGGYGAALLLDTWALLGRQDLRAAEEALWRWMTAAALVRARGDGGVVMVVAEASIPTVQSLMRWDPASHAEAELAARTEVGLPPSVHIAAVDGTTGAVNELLQEARLPDEADLLGPVDLPQGVRRPAGTPLGAPISRLLVRVPREQGWQLAASLRRGIGVLSVRQTHQLVRVQIDPLHIG</sequence>
<name>PRIA_MYCLE</name>